<reference key="1">
    <citation type="journal article" date="2008" name="BMC Genomics">
        <title>Comparative genomic analysis of the gut bacterium Bifidobacterium longum reveals loci susceptible to deletion during pure culture growth.</title>
        <authorList>
            <person name="Lee J.H."/>
            <person name="Karamychev V.N."/>
            <person name="Kozyavkin S.A."/>
            <person name="Mills D."/>
            <person name="Pavlov A.R."/>
            <person name="Pavlova N.V."/>
            <person name="Polouchine N.N."/>
            <person name="Richardson P.M."/>
            <person name="Shakhova V.V."/>
            <person name="Slesarev A.I."/>
            <person name="Weimer B."/>
            <person name="O'Sullivan D.J."/>
        </authorList>
    </citation>
    <scope>NUCLEOTIDE SEQUENCE [LARGE SCALE GENOMIC DNA]</scope>
    <source>
        <strain>DJO10A</strain>
    </source>
</reference>
<sequence length="158" mass="18277">MPKETGEKLIVQNKKARHDYAIEDKYEAGLALTGTEVKSLREGRASLSEAFISIDRRGEMWLEGANIPEYLNGTWNNHAPKRKRKLLLHRLQITKLARGIEAKGYTIVPLSLYFKDGRVKAEIALARGKKEFDKRQALREEQDKREALRAMRYANMRH</sequence>
<comment type="function">
    <text evidence="1">Required for rescue of stalled ribosomes mediated by trans-translation. Binds to transfer-messenger RNA (tmRNA), required for stable association of tmRNA with ribosomes. tmRNA and SmpB together mimic tRNA shape, replacing the anticodon stem-loop with SmpB. tmRNA is encoded by the ssrA gene; the 2 termini fold to resemble tRNA(Ala) and it encodes a 'tag peptide', a short internal open reading frame. During trans-translation Ala-aminoacylated tmRNA acts like a tRNA, entering the A-site of stalled ribosomes, displacing the stalled mRNA. The ribosome then switches to translate the ORF on the tmRNA; the nascent peptide is terminated with the 'tag peptide' encoded by the tmRNA and targeted for degradation. The ribosome is freed to recommence translation, which seems to be the essential function of trans-translation.</text>
</comment>
<comment type="subcellular location">
    <subcellularLocation>
        <location evidence="1">Cytoplasm</location>
    </subcellularLocation>
    <text evidence="1">The tmRNA-SmpB complex associates with stalled 70S ribosomes.</text>
</comment>
<comment type="similarity">
    <text evidence="1">Belongs to the SmpB family.</text>
</comment>
<organism>
    <name type="scientific">Bifidobacterium longum (strain DJO10A)</name>
    <dbReference type="NCBI Taxonomy" id="205913"/>
    <lineage>
        <taxon>Bacteria</taxon>
        <taxon>Bacillati</taxon>
        <taxon>Actinomycetota</taxon>
        <taxon>Actinomycetes</taxon>
        <taxon>Bifidobacteriales</taxon>
        <taxon>Bifidobacteriaceae</taxon>
        <taxon>Bifidobacterium</taxon>
    </lineage>
</organism>
<dbReference type="EMBL" id="CP000605">
    <property type="protein sequence ID" value="ACD98384.1"/>
    <property type="molecule type" value="Genomic_DNA"/>
</dbReference>
<dbReference type="RefSeq" id="WP_007051292.1">
    <property type="nucleotide sequence ID" value="NZ_AABM02000006.1"/>
</dbReference>
<dbReference type="SMR" id="B3DTB5"/>
<dbReference type="GeneID" id="69577672"/>
<dbReference type="KEGG" id="blj:BLD_0938"/>
<dbReference type="HOGENOM" id="CLU_108953_2_1_11"/>
<dbReference type="Proteomes" id="UP000002419">
    <property type="component" value="Chromosome"/>
</dbReference>
<dbReference type="GO" id="GO:0005829">
    <property type="term" value="C:cytosol"/>
    <property type="evidence" value="ECO:0007669"/>
    <property type="project" value="TreeGrafter"/>
</dbReference>
<dbReference type="GO" id="GO:0003723">
    <property type="term" value="F:RNA binding"/>
    <property type="evidence" value="ECO:0007669"/>
    <property type="project" value="UniProtKB-UniRule"/>
</dbReference>
<dbReference type="GO" id="GO:0070929">
    <property type="term" value="P:trans-translation"/>
    <property type="evidence" value="ECO:0007669"/>
    <property type="project" value="UniProtKB-UniRule"/>
</dbReference>
<dbReference type="CDD" id="cd09294">
    <property type="entry name" value="SmpB"/>
    <property type="match status" value="1"/>
</dbReference>
<dbReference type="Gene3D" id="2.40.280.10">
    <property type="match status" value="1"/>
</dbReference>
<dbReference type="HAMAP" id="MF_00023">
    <property type="entry name" value="SmpB"/>
    <property type="match status" value="1"/>
</dbReference>
<dbReference type="InterPro" id="IPR023620">
    <property type="entry name" value="SmpB"/>
</dbReference>
<dbReference type="InterPro" id="IPR000037">
    <property type="entry name" value="SsrA-bd_prot"/>
</dbReference>
<dbReference type="InterPro" id="IPR020081">
    <property type="entry name" value="SsrA-bd_prot_CS"/>
</dbReference>
<dbReference type="NCBIfam" id="NF003843">
    <property type="entry name" value="PRK05422.1"/>
    <property type="match status" value="1"/>
</dbReference>
<dbReference type="NCBIfam" id="TIGR00086">
    <property type="entry name" value="smpB"/>
    <property type="match status" value="1"/>
</dbReference>
<dbReference type="PANTHER" id="PTHR30308:SF2">
    <property type="entry name" value="SSRA-BINDING PROTEIN"/>
    <property type="match status" value="1"/>
</dbReference>
<dbReference type="PANTHER" id="PTHR30308">
    <property type="entry name" value="TMRNA-BINDING COMPONENT OF TRANS-TRANSLATION TAGGING COMPLEX"/>
    <property type="match status" value="1"/>
</dbReference>
<dbReference type="Pfam" id="PF01668">
    <property type="entry name" value="SmpB"/>
    <property type="match status" value="1"/>
</dbReference>
<dbReference type="SUPFAM" id="SSF74982">
    <property type="entry name" value="Small protein B (SmpB)"/>
    <property type="match status" value="1"/>
</dbReference>
<dbReference type="PROSITE" id="PS01317">
    <property type="entry name" value="SSRP"/>
    <property type="match status" value="1"/>
</dbReference>
<name>SSRP_BIFLD</name>
<proteinExistence type="inferred from homology"/>
<gene>
    <name evidence="1" type="primary">smpB</name>
    <name type="ordered locus">BLD_0938</name>
</gene>
<feature type="chain" id="PRO_1000090137" description="SsrA-binding protein">
    <location>
        <begin position="1"/>
        <end position="158"/>
    </location>
</feature>
<protein>
    <recommendedName>
        <fullName evidence="1">SsrA-binding protein</fullName>
    </recommendedName>
    <alternativeName>
        <fullName evidence="1">Small protein B</fullName>
    </alternativeName>
</protein>
<accession>B3DTB5</accession>
<keyword id="KW-0963">Cytoplasm</keyword>
<keyword id="KW-0694">RNA-binding</keyword>
<evidence type="ECO:0000255" key="1">
    <source>
        <dbReference type="HAMAP-Rule" id="MF_00023"/>
    </source>
</evidence>